<gene>
    <name evidence="2" type="primary">GMPR2</name>
</gene>
<comment type="function">
    <text evidence="1 2">Catalyzes the irreversible NADPH-dependent deamination of GMP to IMP. It functions in the conversion of nucleobase, nucleoside and nucleotide derivatives of G to A nucleotides, and in maintaining the intracellular balance of A and G nucleotides (Probable). Plays a role in modulating cellular differentiation (By similarity).</text>
</comment>
<comment type="catalytic activity">
    <reaction evidence="2">
        <text>IMP + NH4(+) + NADP(+) = GMP + NADPH + 2 H(+)</text>
        <dbReference type="Rhea" id="RHEA:17185"/>
        <dbReference type="ChEBI" id="CHEBI:15378"/>
        <dbReference type="ChEBI" id="CHEBI:28938"/>
        <dbReference type="ChEBI" id="CHEBI:57783"/>
        <dbReference type="ChEBI" id="CHEBI:58053"/>
        <dbReference type="ChEBI" id="CHEBI:58115"/>
        <dbReference type="ChEBI" id="CHEBI:58349"/>
        <dbReference type="EC" id="1.7.1.7"/>
    </reaction>
</comment>
<comment type="subunit">
    <text evidence="2">Homotetramer.</text>
</comment>
<comment type="similarity">
    <text evidence="2">Belongs to the IMPDH/GMPR family. GuaC type 1 subfamily.</text>
</comment>
<accession>Q32L93</accession>
<organism>
    <name type="scientific">Bos taurus</name>
    <name type="common">Bovine</name>
    <dbReference type="NCBI Taxonomy" id="9913"/>
    <lineage>
        <taxon>Eukaryota</taxon>
        <taxon>Metazoa</taxon>
        <taxon>Chordata</taxon>
        <taxon>Craniata</taxon>
        <taxon>Vertebrata</taxon>
        <taxon>Euteleostomi</taxon>
        <taxon>Mammalia</taxon>
        <taxon>Eutheria</taxon>
        <taxon>Laurasiatheria</taxon>
        <taxon>Artiodactyla</taxon>
        <taxon>Ruminantia</taxon>
        <taxon>Pecora</taxon>
        <taxon>Bovidae</taxon>
        <taxon>Bovinae</taxon>
        <taxon>Bos</taxon>
    </lineage>
</organism>
<protein>
    <recommendedName>
        <fullName evidence="2">GMP reductase 2</fullName>
        <shortName evidence="2">GMPR 2</shortName>
        <ecNumber evidence="2">1.7.1.7</ecNumber>
    </recommendedName>
    <alternativeName>
        <fullName evidence="2">Guanosine 5'-monophosphate oxidoreductase 2</fullName>
        <shortName evidence="2">Guanosine monophosphate reductase 2</shortName>
    </alternativeName>
</protein>
<proteinExistence type="evidence at transcript level"/>
<sequence>MPHIDNDVKLDFKDVLLRPKRSTLKSRSEVDLTRSFAFRNSKQMYTGIPIIAANMDTVGTFEMAKVLCKFSLFTAVHKHYSLEQWKEFASQNPDCLEHLAASSGTGSSDFEQLEQILNAIPQVKYVCLDVANGYSEHFVEFVKDVRKRFPEHTIMAGNVVTGEMVEELILSGADIIKVGIGPGSVCTTRKKTGVGYPQLSAVMECADAAHGLKGHIISDGGCSCPGDVAKAFGAGADFVMLGGMLAGHSESGGELIERNGRKYKLFYGMSSEMAMKKYAGGVAEYRASEGKTVEVPFKGDVEHTIRDIIGGIRSTCTYVGAAKQKELSRRTTFIRVTQQVKPIFSDES</sequence>
<dbReference type="EC" id="1.7.1.7" evidence="2"/>
<dbReference type="EMBL" id="BC109695">
    <property type="protein sequence ID" value="AAI09696.1"/>
    <property type="molecule type" value="mRNA"/>
</dbReference>
<dbReference type="RefSeq" id="NP_001033208.1">
    <property type="nucleotide sequence ID" value="NM_001038119.1"/>
</dbReference>
<dbReference type="SMR" id="Q32L93"/>
<dbReference type="FunCoup" id="Q32L93">
    <property type="interactions" value="3140"/>
</dbReference>
<dbReference type="STRING" id="9913.ENSBTAP00000003519"/>
<dbReference type="PaxDb" id="9913-ENSBTAP00000003519"/>
<dbReference type="GeneID" id="515837"/>
<dbReference type="KEGG" id="bta:515837"/>
<dbReference type="CTD" id="51292"/>
<dbReference type="eggNOG" id="KOG2550">
    <property type="taxonomic scope" value="Eukaryota"/>
</dbReference>
<dbReference type="InParanoid" id="Q32L93"/>
<dbReference type="OrthoDB" id="418595at2759"/>
<dbReference type="Proteomes" id="UP000009136">
    <property type="component" value="Unplaced"/>
</dbReference>
<dbReference type="GO" id="GO:1902560">
    <property type="term" value="C:GMP reductase complex"/>
    <property type="evidence" value="ECO:0007669"/>
    <property type="project" value="InterPro"/>
</dbReference>
<dbReference type="GO" id="GO:0003920">
    <property type="term" value="F:GMP reductase activity"/>
    <property type="evidence" value="ECO:0000250"/>
    <property type="project" value="UniProtKB"/>
</dbReference>
<dbReference type="GO" id="GO:0046872">
    <property type="term" value="F:metal ion binding"/>
    <property type="evidence" value="ECO:0007669"/>
    <property type="project" value="UniProtKB-KW"/>
</dbReference>
<dbReference type="GO" id="GO:0046037">
    <property type="term" value="P:GMP metabolic process"/>
    <property type="evidence" value="ECO:0000250"/>
    <property type="project" value="UniProtKB"/>
</dbReference>
<dbReference type="GO" id="GO:0006144">
    <property type="term" value="P:purine nucleobase metabolic process"/>
    <property type="evidence" value="ECO:0007669"/>
    <property type="project" value="UniProtKB-KW"/>
</dbReference>
<dbReference type="CDD" id="cd00381">
    <property type="entry name" value="IMPDH"/>
    <property type="match status" value="1"/>
</dbReference>
<dbReference type="FunFam" id="3.20.20.70:FF:000012">
    <property type="entry name" value="GMP reductase"/>
    <property type="match status" value="1"/>
</dbReference>
<dbReference type="Gene3D" id="3.20.20.70">
    <property type="entry name" value="Aldolase class I"/>
    <property type="match status" value="1"/>
</dbReference>
<dbReference type="HAMAP" id="MF_00596">
    <property type="entry name" value="GMP_reduct_type1"/>
    <property type="match status" value="1"/>
</dbReference>
<dbReference type="InterPro" id="IPR013785">
    <property type="entry name" value="Aldolase_TIM"/>
</dbReference>
<dbReference type="InterPro" id="IPR050139">
    <property type="entry name" value="GMP_reductase"/>
</dbReference>
<dbReference type="InterPro" id="IPR005993">
    <property type="entry name" value="GMPR"/>
</dbReference>
<dbReference type="InterPro" id="IPR015875">
    <property type="entry name" value="IMP_DH/GMP_Rdtase_CS"/>
</dbReference>
<dbReference type="InterPro" id="IPR001093">
    <property type="entry name" value="IMP_DH_GMPRt"/>
</dbReference>
<dbReference type="NCBIfam" id="TIGR01305">
    <property type="entry name" value="GMP_reduct_1"/>
    <property type="match status" value="1"/>
</dbReference>
<dbReference type="NCBIfam" id="NF003470">
    <property type="entry name" value="PRK05096.1"/>
    <property type="match status" value="1"/>
</dbReference>
<dbReference type="PANTHER" id="PTHR43170">
    <property type="entry name" value="GMP REDUCTASE"/>
    <property type="match status" value="1"/>
</dbReference>
<dbReference type="PANTHER" id="PTHR43170:SF4">
    <property type="entry name" value="GMP REDUCTASE 2"/>
    <property type="match status" value="1"/>
</dbReference>
<dbReference type="Pfam" id="PF00478">
    <property type="entry name" value="IMPDH"/>
    <property type="match status" value="1"/>
</dbReference>
<dbReference type="PIRSF" id="PIRSF000235">
    <property type="entry name" value="GMP_reductase"/>
    <property type="match status" value="1"/>
</dbReference>
<dbReference type="SMART" id="SM01240">
    <property type="entry name" value="IMPDH"/>
    <property type="match status" value="1"/>
</dbReference>
<dbReference type="SUPFAM" id="SSF51412">
    <property type="entry name" value="Inosine monophosphate dehydrogenase (IMPDH)"/>
    <property type="match status" value="1"/>
</dbReference>
<dbReference type="PROSITE" id="PS00487">
    <property type="entry name" value="IMP_DH_GMP_RED"/>
    <property type="match status" value="1"/>
</dbReference>
<reference key="1">
    <citation type="submission" date="2005-11" db="EMBL/GenBank/DDBJ databases">
        <authorList>
            <consortium name="NIH - Mammalian Gene Collection (MGC) project"/>
        </authorList>
    </citation>
    <scope>NUCLEOTIDE SEQUENCE [LARGE SCALE MRNA]</scope>
    <source>
        <strain>Crossbred X Angus</strain>
        <tissue>Liver</tissue>
    </source>
</reference>
<name>GMPR2_BOVIN</name>
<evidence type="ECO:0000250" key="1">
    <source>
        <dbReference type="UniProtKB" id="Q9P2T1"/>
    </source>
</evidence>
<evidence type="ECO:0000255" key="2">
    <source>
        <dbReference type="HAMAP-Rule" id="MF_03195"/>
    </source>
</evidence>
<keyword id="KW-0007">Acetylation</keyword>
<keyword id="KW-0479">Metal-binding</keyword>
<keyword id="KW-0521">NADP</keyword>
<keyword id="KW-0560">Oxidoreductase</keyword>
<keyword id="KW-0630">Potassium</keyword>
<keyword id="KW-0659">Purine metabolism</keyword>
<keyword id="KW-1185">Reference proteome</keyword>
<feature type="chain" id="PRO_0000253472" description="GMP reductase 2">
    <location>
        <begin position="1"/>
        <end position="348"/>
    </location>
</feature>
<feature type="active site" description="Thioimidate intermediate" evidence="2">
    <location>
        <position position="186"/>
    </location>
</feature>
<feature type="active site" description="Proton donor/acceptor" evidence="2">
    <location>
        <position position="188"/>
    </location>
</feature>
<feature type="binding site" evidence="2">
    <location>
        <begin position="26"/>
        <end position="27"/>
    </location>
    <ligand>
        <name>NADP(+)</name>
        <dbReference type="ChEBI" id="CHEBI:58349"/>
        <note>ligand shared between two neighboring subunits</note>
    </ligand>
</feature>
<feature type="binding site" description="in other chain" evidence="2">
    <location>
        <position position="78"/>
    </location>
    <ligand>
        <name>NADP(+)</name>
        <dbReference type="ChEBI" id="CHEBI:58349"/>
        <note>ligand shared between two neighboring subunits</note>
    </ligand>
</feature>
<feature type="binding site" description="in other chain" evidence="2">
    <location>
        <begin position="129"/>
        <end position="131"/>
    </location>
    <ligand>
        <name>NADP(+)</name>
        <dbReference type="ChEBI" id="CHEBI:58349"/>
        <note>ligand shared between two neighboring subunits</note>
    </ligand>
</feature>
<feature type="binding site" description="in other chain" evidence="2">
    <location>
        <begin position="180"/>
        <end position="181"/>
    </location>
    <ligand>
        <name>NADP(+)</name>
        <dbReference type="ChEBI" id="CHEBI:58349"/>
        <note>ligand shared between two neighboring subunits</note>
    </ligand>
</feature>
<feature type="binding site" evidence="2">
    <location>
        <position position="181"/>
    </location>
    <ligand>
        <name>K(+)</name>
        <dbReference type="ChEBI" id="CHEBI:29103"/>
    </ligand>
</feature>
<feature type="binding site" evidence="2">
    <location>
        <position position="183"/>
    </location>
    <ligand>
        <name>K(+)</name>
        <dbReference type="ChEBI" id="CHEBI:29103"/>
    </ligand>
</feature>
<feature type="binding site" evidence="2">
    <location>
        <position position="186"/>
    </location>
    <ligand>
        <name>K(+)</name>
        <dbReference type="ChEBI" id="CHEBI:29103"/>
    </ligand>
</feature>
<feature type="binding site" evidence="2">
    <location>
        <position position="189"/>
    </location>
    <ligand>
        <name>K(+)</name>
        <dbReference type="ChEBI" id="CHEBI:29103"/>
    </ligand>
</feature>
<feature type="binding site" evidence="2">
    <location>
        <begin position="219"/>
        <end position="221"/>
    </location>
    <ligand>
        <name>GMP</name>
        <dbReference type="ChEBI" id="CHEBI:58115"/>
    </ligand>
</feature>
<feature type="binding site" evidence="2">
    <location>
        <begin position="242"/>
        <end position="243"/>
    </location>
    <ligand>
        <name>GMP</name>
        <dbReference type="ChEBI" id="CHEBI:58115"/>
    </ligand>
</feature>
<feature type="binding site" evidence="2">
    <location>
        <begin position="268"/>
        <end position="270"/>
    </location>
    <ligand>
        <name>GMP</name>
        <dbReference type="ChEBI" id="CHEBI:58115"/>
    </ligand>
</feature>
<feature type="binding site" description="in other chain" evidence="2">
    <location>
        <position position="269"/>
    </location>
    <ligand>
        <name>NADP(+)</name>
        <dbReference type="ChEBI" id="CHEBI:58349"/>
        <note>ligand shared between two neighboring subunits</note>
    </ligand>
</feature>
<feature type="binding site" description="in other chain" evidence="2">
    <location>
        <begin position="285"/>
        <end position="286"/>
    </location>
    <ligand>
        <name>NADP(+)</name>
        <dbReference type="ChEBI" id="CHEBI:58349"/>
        <note>ligand shared between two neighboring subunits</note>
    </ligand>
</feature>
<feature type="binding site" evidence="2">
    <location>
        <begin position="286"/>
        <end position="290"/>
    </location>
    <ligand>
        <name>GMP</name>
        <dbReference type="ChEBI" id="CHEBI:58115"/>
    </ligand>
</feature>
<feature type="binding site" evidence="2">
    <location>
        <begin position="314"/>
        <end position="317"/>
    </location>
    <ligand>
        <name>NADP(+)</name>
        <dbReference type="ChEBI" id="CHEBI:58349"/>
        <note>ligand shared between two neighboring subunits</note>
    </ligand>
</feature>
<feature type="modified residue" description="N6-acetyllysine" evidence="1">
    <location>
        <position position="291"/>
    </location>
</feature>